<comment type="similarity">
    <text evidence="1">Belongs to the SlyX family.</text>
</comment>
<protein>
    <recommendedName>
        <fullName evidence="1">Protein SlyX homolog</fullName>
    </recommendedName>
</protein>
<proteinExistence type="inferred from homology"/>
<dbReference type="EMBL" id="FM178379">
    <property type="protein sequence ID" value="CAQ77988.1"/>
    <property type="molecule type" value="Genomic_DNA"/>
</dbReference>
<dbReference type="RefSeq" id="WP_012549138.1">
    <property type="nucleotide sequence ID" value="NC_011312.1"/>
</dbReference>
<dbReference type="SMR" id="B6EPQ8"/>
<dbReference type="KEGG" id="vsa:VSAL_I0303"/>
<dbReference type="eggNOG" id="COG2900">
    <property type="taxonomic scope" value="Bacteria"/>
</dbReference>
<dbReference type="HOGENOM" id="CLU_180796_4_0_6"/>
<dbReference type="Proteomes" id="UP000001730">
    <property type="component" value="Chromosome 1"/>
</dbReference>
<dbReference type="Gene3D" id="1.20.5.300">
    <property type="match status" value="1"/>
</dbReference>
<dbReference type="HAMAP" id="MF_00715">
    <property type="entry name" value="SlyX"/>
    <property type="match status" value="1"/>
</dbReference>
<dbReference type="InterPro" id="IPR007236">
    <property type="entry name" value="SlyX"/>
</dbReference>
<dbReference type="NCBIfam" id="NF003357">
    <property type="entry name" value="PRK04406.1"/>
    <property type="match status" value="1"/>
</dbReference>
<dbReference type="PANTHER" id="PTHR36508">
    <property type="entry name" value="PROTEIN SLYX"/>
    <property type="match status" value="1"/>
</dbReference>
<dbReference type="PANTHER" id="PTHR36508:SF1">
    <property type="entry name" value="PROTEIN SLYX"/>
    <property type="match status" value="1"/>
</dbReference>
<dbReference type="Pfam" id="PF04102">
    <property type="entry name" value="SlyX"/>
    <property type="match status" value="1"/>
</dbReference>
<gene>
    <name evidence="1" type="primary">slyX</name>
    <name type="ordered locus">VSAL_I0303</name>
</gene>
<accession>B6EPQ8</accession>
<name>SLYX_ALISL</name>
<organism>
    <name type="scientific">Aliivibrio salmonicida (strain LFI1238)</name>
    <name type="common">Vibrio salmonicida (strain LFI1238)</name>
    <dbReference type="NCBI Taxonomy" id="316275"/>
    <lineage>
        <taxon>Bacteria</taxon>
        <taxon>Pseudomonadati</taxon>
        <taxon>Pseudomonadota</taxon>
        <taxon>Gammaproteobacteria</taxon>
        <taxon>Vibrionales</taxon>
        <taxon>Vibrionaceae</taxon>
        <taxon>Aliivibrio</taxon>
    </lineage>
</organism>
<sequence length="74" mass="8440">MTTDIKQLELKISDLECQMAFQEQTIDELNDALSQQQLLITNMQVQMKFVVGKMKTMDTSSMADASEETPPPHY</sequence>
<evidence type="ECO:0000255" key="1">
    <source>
        <dbReference type="HAMAP-Rule" id="MF_00715"/>
    </source>
</evidence>
<feature type="chain" id="PRO_1000195829" description="Protein SlyX homolog">
    <location>
        <begin position="1"/>
        <end position="74"/>
    </location>
</feature>
<reference key="1">
    <citation type="journal article" date="2008" name="BMC Genomics">
        <title>The genome sequence of the fish pathogen Aliivibrio salmonicida strain LFI1238 shows extensive evidence of gene decay.</title>
        <authorList>
            <person name="Hjerde E."/>
            <person name="Lorentzen M.S."/>
            <person name="Holden M.T."/>
            <person name="Seeger K."/>
            <person name="Paulsen S."/>
            <person name="Bason N."/>
            <person name="Churcher C."/>
            <person name="Harris D."/>
            <person name="Norbertczak H."/>
            <person name="Quail M.A."/>
            <person name="Sanders S."/>
            <person name="Thurston S."/>
            <person name="Parkhill J."/>
            <person name="Willassen N.P."/>
            <person name="Thomson N.R."/>
        </authorList>
    </citation>
    <scope>NUCLEOTIDE SEQUENCE [LARGE SCALE GENOMIC DNA]</scope>
    <source>
        <strain>LFI1238</strain>
    </source>
</reference>